<dbReference type="EMBL" id="AP008231">
    <property type="protein sequence ID" value="BAD78719.1"/>
    <property type="molecule type" value="Genomic_DNA"/>
</dbReference>
<dbReference type="RefSeq" id="WP_011242841.1">
    <property type="nucleotide sequence ID" value="NC_006576.1"/>
</dbReference>
<dbReference type="SMR" id="Q5N4Q0"/>
<dbReference type="KEGG" id="syc:syc0529_d"/>
<dbReference type="eggNOG" id="COG0217">
    <property type="taxonomic scope" value="Bacteria"/>
</dbReference>
<dbReference type="Proteomes" id="UP000001175">
    <property type="component" value="Chromosome"/>
</dbReference>
<dbReference type="GO" id="GO:0005829">
    <property type="term" value="C:cytosol"/>
    <property type="evidence" value="ECO:0007669"/>
    <property type="project" value="TreeGrafter"/>
</dbReference>
<dbReference type="GO" id="GO:0003677">
    <property type="term" value="F:DNA binding"/>
    <property type="evidence" value="ECO:0007669"/>
    <property type="project" value="UniProtKB-UniRule"/>
</dbReference>
<dbReference type="GO" id="GO:0006355">
    <property type="term" value="P:regulation of DNA-templated transcription"/>
    <property type="evidence" value="ECO:0007669"/>
    <property type="project" value="UniProtKB-UniRule"/>
</dbReference>
<dbReference type="FunFam" id="1.10.10.200:FF:000002">
    <property type="entry name" value="Probable transcriptional regulatory protein CLM62_37755"/>
    <property type="match status" value="1"/>
</dbReference>
<dbReference type="Gene3D" id="1.10.10.200">
    <property type="match status" value="1"/>
</dbReference>
<dbReference type="Gene3D" id="3.30.70.980">
    <property type="match status" value="2"/>
</dbReference>
<dbReference type="HAMAP" id="MF_00693">
    <property type="entry name" value="Transcrip_reg_TACO1"/>
    <property type="match status" value="1"/>
</dbReference>
<dbReference type="InterPro" id="IPR017856">
    <property type="entry name" value="Integrase-like_N"/>
</dbReference>
<dbReference type="InterPro" id="IPR048300">
    <property type="entry name" value="TACO1_YebC-like_2nd/3rd_dom"/>
</dbReference>
<dbReference type="InterPro" id="IPR049083">
    <property type="entry name" value="TACO1_YebC_N"/>
</dbReference>
<dbReference type="InterPro" id="IPR002876">
    <property type="entry name" value="Transcrip_reg_TACO1-like"/>
</dbReference>
<dbReference type="InterPro" id="IPR026564">
    <property type="entry name" value="Transcrip_reg_TACO1-like_dom3"/>
</dbReference>
<dbReference type="InterPro" id="IPR029072">
    <property type="entry name" value="YebC-like"/>
</dbReference>
<dbReference type="NCBIfam" id="NF001030">
    <property type="entry name" value="PRK00110.1"/>
    <property type="match status" value="1"/>
</dbReference>
<dbReference type="NCBIfam" id="NF009044">
    <property type="entry name" value="PRK12378.1"/>
    <property type="match status" value="1"/>
</dbReference>
<dbReference type="NCBIfam" id="TIGR01033">
    <property type="entry name" value="YebC/PmpR family DNA-binding transcriptional regulator"/>
    <property type="match status" value="1"/>
</dbReference>
<dbReference type="PANTHER" id="PTHR12532:SF6">
    <property type="entry name" value="TRANSCRIPTIONAL REGULATORY PROTEIN YEBC-RELATED"/>
    <property type="match status" value="1"/>
</dbReference>
<dbReference type="PANTHER" id="PTHR12532">
    <property type="entry name" value="TRANSLATIONAL ACTIVATOR OF CYTOCHROME C OXIDASE 1"/>
    <property type="match status" value="1"/>
</dbReference>
<dbReference type="Pfam" id="PF20772">
    <property type="entry name" value="TACO1_YebC_N"/>
    <property type="match status" value="1"/>
</dbReference>
<dbReference type="Pfam" id="PF01709">
    <property type="entry name" value="Transcrip_reg"/>
    <property type="match status" value="1"/>
</dbReference>
<dbReference type="SUPFAM" id="SSF75625">
    <property type="entry name" value="YebC-like"/>
    <property type="match status" value="1"/>
</dbReference>
<accession>Q5N4Q0</accession>
<feature type="chain" id="PRO_0000175914" description="Probable transcriptional regulatory protein syc0529_d">
    <location>
        <begin position="1"/>
        <end position="253"/>
    </location>
</feature>
<evidence type="ECO:0000255" key="1">
    <source>
        <dbReference type="HAMAP-Rule" id="MF_00693"/>
    </source>
</evidence>
<reference key="1">
    <citation type="journal article" date="2007" name="Photosyn. Res.">
        <title>Complete nucleotide sequence of the freshwater unicellular cyanobacterium Synechococcus elongatus PCC 6301 chromosome: gene content and organization.</title>
        <authorList>
            <person name="Sugita C."/>
            <person name="Ogata K."/>
            <person name="Shikata M."/>
            <person name="Jikuya H."/>
            <person name="Takano J."/>
            <person name="Furumichi M."/>
            <person name="Kanehisa M."/>
            <person name="Omata T."/>
            <person name="Sugiura M."/>
            <person name="Sugita M."/>
        </authorList>
    </citation>
    <scope>NUCLEOTIDE SEQUENCE [LARGE SCALE GENOMIC DNA]</scope>
    <source>
        <strain>ATCC 27144 / PCC 6301 / SAUG 1402/1</strain>
    </source>
</reference>
<gene>
    <name type="ordered locus">syc0529_d</name>
</gene>
<proteinExistence type="inferred from homology"/>
<comment type="subcellular location">
    <subcellularLocation>
        <location evidence="1">Cytoplasm</location>
    </subcellularLocation>
</comment>
<comment type="similarity">
    <text evidence="1">Belongs to the TACO1 family.</text>
</comment>
<name>Y529_SYNP6</name>
<keyword id="KW-0963">Cytoplasm</keyword>
<keyword id="KW-0238">DNA-binding</keyword>
<keyword id="KW-0804">Transcription</keyword>
<keyword id="KW-0805">Transcription regulation</keyword>
<organism>
    <name type="scientific">Synechococcus sp. (strain ATCC 27144 / PCC 6301 / SAUG 1402/1)</name>
    <name type="common">Anacystis nidulans</name>
    <dbReference type="NCBI Taxonomy" id="269084"/>
    <lineage>
        <taxon>Bacteria</taxon>
        <taxon>Bacillati</taxon>
        <taxon>Cyanobacteriota</taxon>
        <taxon>Cyanophyceae</taxon>
        <taxon>Synechococcales</taxon>
        <taxon>Synechococcaceae</taxon>
        <taxon>Synechococcus</taxon>
    </lineage>
</organism>
<protein>
    <recommendedName>
        <fullName evidence="1">Probable transcriptional regulatory protein syc0529_d</fullName>
    </recommendedName>
</protein>
<sequence length="253" mass="27385">MAGHSKWANIKRQKARVDAKKAQVFARLSRAMIVAARQGLPDPAANFQLRTAIEKAKAAGIPNDNIERAIAKGAGTLSGDGRQFESVRYEGYGPSGIAILIEALTDNRNRTAANLRAAFSKQGGNLGETGCVSWMFRQRGVVQLTGAIAEADLLKALLDLPAESYDLDESGAIVYCSIADLEALSTQLRQLGYPVEDSELRWIPNDYQLVTDGEQARSLLRLLDTLETLEDVCSVTANLELPPELVTALEATL</sequence>